<comment type="function">
    <text evidence="3">Part of the ABC transporter complex NikABCDE (Opp2) involved in nickel import. Probably responsible for the translocation of the substrate across the membrane. Required for full urease activity and plays a significant role in the virulence of S.aureus during urinary tract infection (UTI).</text>
</comment>
<comment type="subunit">
    <text evidence="3">The complex is composed of two ATP-binding proteins (NikD and NikE), two transmembrane proteins (NikB and NikC) and a solute-binding protein (NikA).</text>
</comment>
<comment type="subcellular location">
    <subcellularLocation>
        <location evidence="5">Cell membrane</location>
        <topology evidence="1">Multi-pass membrane protein</topology>
    </subcellularLocation>
</comment>
<comment type="induction">
    <text evidence="3">Transcription is stable during the exponential phase and increases only in standard conditions in late exponential phase.</text>
</comment>
<comment type="disruption phenotype">
    <text evidence="3">Deletion of the nikBCDE operon strongly reduces nickel transport and urease activity. Mutant shows decreased virulence in a mouse model of ascending UTI.</text>
</comment>
<comment type="similarity">
    <text evidence="5">Belongs to the binding-protein-dependent transport system permease family. OppBC subfamily.</text>
</comment>
<keyword id="KW-1003">Cell membrane</keyword>
<keyword id="KW-0406">Ion transport</keyword>
<keyword id="KW-0472">Membrane</keyword>
<keyword id="KW-0533">Nickel</keyword>
<keyword id="KW-0921">Nickel transport</keyword>
<keyword id="KW-1185">Reference proteome</keyword>
<keyword id="KW-0812">Transmembrane</keyword>
<keyword id="KW-1133">Transmembrane helix</keyword>
<keyword id="KW-0813">Transport</keyword>
<evidence type="ECO:0000255" key="1"/>
<evidence type="ECO:0000255" key="2">
    <source>
        <dbReference type="PROSITE-ProRule" id="PRU00441"/>
    </source>
</evidence>
<evidence type="ECO:0000269" key="3">
    <source>
    </source>
</evidence>
<evidence type="ECO:0000303" key="4">
    <source>
    </source>
</evidence>
<evidence type="ECO:0000305" key="5"/>
<name>NIKB_STAA8</name>
<reference key="1">
    <citation type="journal article" date="1998" name="Mol. Microbiol.">
        <title>Staphylococcus aureus genetic loci impacting growth and survival in multiple infection environments.</title>
        <authorList>
            <person name="Coulter S.N."/>
            <person name="Schwan W.R."/>
            <person name="Ng E.Y.W."/>
            <person name="Langhorne M.H."/>
            <person name="Ritchie H.D."/>
            <person name="Westbrock-Wadman S."/>
            <person name="Hufnagle W.O."/>
            <person name="Folger K.R."/>
            <person name="Bayer A.S."/>
            <person name="Stover C.K."/>
        </authorList>
    </citation>
    <scope>NUCLEOTIDE SEQUENCE [GENOMIC DNA]</scope>
</reference>
<reference key="2">
    <citation type="submission" date="2002-12" db="EMBL/GenBank/DDBJ databases">
        <title>Role of the oligopeptide permease (opp-2) operon in Staphylococcus aureus biofilm formation.</title>
        <authorList>
            <person name="Cramton S.E."/>
            <person name="Madimidou F."/>
            <person name="Goetz F."/>
        </authorList>
    </citation>
    <scope>NUCLEOTIDE SEQUENCE [GENOMIC DNA]</scope>
</reference>
<reference key="3">
    <citation type="book" date="2006" name="Gram positive pathogens, 2nd edition">
        <title>The Staphylococcus aureus NCTC 8325 genome.</title>
        <editorList>
            <person name="Fischetti V."/>
            <person name="Novick R."/>
            <person name="Ferretti J."/>
            <person name="Portnoy D."/>
            <person name="Rood J."/>
        </editorList>
        <authorList>
            <person name="Gillaspy A.F."/>
            <person name="Worrell V."/>
            <person name="Orvis J."/>
            <person name="Roe B.A."/>
            <person name="Dyer D.W."/>
            <person name="Iandolo J.J."/>
        </authorList>
    </citation>
    <scope>NUCLEOTIDE SEQUENCE [LARGE SCALE GENOMIC DNA]</scope>
    <source>
        <strain>NCTC 8325 / PS 47</strain>
    </source>
</reference>
<reference key="4">
    <citation type="journal article" date="2010" name="Mol. Microbiol.">
        <title>A nickel ABC-transporter of Staphylococcus aureus is involved in urinary tract infection.</title>
        <authorList>
            <person name="Hiron A."/>
            <person name="Posteraro B."/>
            <person name="Carriere M."/>
            <person name="Remy L."/>
            <person name="Delporte C."/>
            <person name="La Sorda M."/>
            <person name="Sanguinetti M."/>
            <person name="Juillard V."/>
            <person name="Borezee-Durant E."/>
        </authorList>
    </citation>
    <scope>FUNCTION</scope>
    <scope>SUBUNIT</scope>
    <scope>INDUCTION</scope>
    <scope>DISRUPTION PHENOTYPE</scope>
    <source>
        <strain>RN6390</strain>
    </source>
</reference>
<sequence>MFIIKSMLYRLMQMIVVLFVISTLTFILMKLSPGNPVDKILHLDVAQVSTEQINATKDKLGLNDSLLVQWWHWMNHLLHFNLGKSFESKEPVTQILFNYAPITLLISFSTLVVSLCISIPLGIIAAKRFHKWTDKVIRVISTLSISLPAFFIGIILLFIVTNLMNIDSVILSQFILPVITLSLGMCAYIIRLVRSNLLMLLQSNIVQASRLRGMNERYILIHDLLKPTILPIIPLLGISLGSLIGGTVVIENLFDIPGIGYLLMDSIKSRDYPVIQGCVLFIGFFVVIINTIADLLTLLLDPKQRLQLGNPKIKTNTPLISESSDRHA</sequence>
<organism>
    <name type="scientific">Staphylococcus aureus (strain NCTC 8325 / PS 47)</name>
    <dbReference type="NCBI Taxonomy" id="93061"/>
    <lineage>
        <taxon>Bacteria</taxon>
        <taxon>Bacillati</taxon>
        <taxon>Bacillota</taxon>
        <taxon>Bacilli</taxon>
        <taxon>Bacillales</taxon>
        <taxon>Staphylococcaceae</taxon>
        <taxon>Staphylococcus</taxon>
    </lineage>
</organism>
<feature type="chain" id="PRO_0000272185" description="Nickel import system permease protein NikB">
    <location>
        <begin position="1"/>
        <end position="328"/>
    </location>
</feature>
<feature type="transmembrane region" description="Helical" evidence="1">
    <location>
        <begin position="11"/>
        <end position="31"/>
    </location>
</feature>
<feature type="transmembrane region" description="Helical" evidence="1">
    <location>
        <begin position="104"/>
        <end position="124"/>
    </location>
</feature>
<feature type="transmembrane region" description="Helical" evidence="1">
    <location>
        <begin position="139"/>
        <end position="159"/>
    </location>
</feature>
<feature type="transmembrane region" description="Helical" evidence="1">
    <location>
        <begin position="170"/>
        <end position="190"/>
    </location>
</feature>
<feature type="transmembrane region" description="Helical" evidence="1">
    <location>
        <begin position="229"/>
        <end position="249"/>
    </location>
</feature>
<feature type="transmembrane region" description="Helical" evidence="1">
    <location>
        <begin position="279"/>
        <end position="299"/>
    </location>
</feature>
<feature type="domain" description="ABC transmembrane type-1" evidence="2">
    <location>
        <begin position="100"/>
        <end position="297"/>
    </location>
</feature>
<gene>
    <name evidence="4" type="primary">nikB</name>
    <name type="synonym">opp-2B</name>
    <name type="synonym">oppB2</name>
    <name type="ordered locus">SAOUHSC_01380</name>
</gene>
<dbReference type="EMBL" id="AF076684">
    <property type="protein sequence ID" value="AAC69843.1"/>
    <property type="molecule type" value="Genomic_DNA"/>
</dbReference>
<dbReference type="EMBL" id="AY205146">
    <property type="protein sequence ID" value="AAO47755.1"/>
    <property type="molecule type" value="Genomic_DNA"/>
</dbReference>
<dbReference type="EMBL" id="CP000253">
    <property type="protein sequence ID" value="ABD30475.1"/>
    <property type="molecule type" value="Genomic_DNA"/>
</dbReference>
<dbReference type="RefSeq" id="WP_000469949.1">
    <property type="nucleotide sequence ID" value="NZ_LS483365.1"/>
</dbReference>
<dbReference type="RefSeq" id="YP_499907.1">
    <property type="nucleotide sequence ID" value="NC_007795.1"/>
</dbReference>
<dbReference type="SMR" id="Q2FYQ5"/>
<dbReference type="STRING" id="93061.SAOUHSC_01380"/>
<dbReference type="PaxDb" id="1280-SAXN108_1397"/>
<dbReference type="GeneID" id="3920789"/>
<dbReference type="KEGG" id="sao:SAOUHSC_01380"/>
<dbReference type="PATRIC" id="fig|93061.5.peg.1264"/>
<dbReference type="eggNOG" id="COG0601">
    <property type="taxonomic scope" value="Bacteria"/>
</dbReference>
<dbReference type="HOGENOM" id="CLU_036879_0_2_9"/>
<dbReference type="OrthoDB" id="9773683at2"/>
<dbReference type="PRO" id="PR:Q2FYQ5"/>
<dbReference type="Proteomes" id="UP000008816">
    <property type="component" value="Chromosome"/>
</dbReference>
<dbReference type="GO" id="GO:0005886">
    <property type="term" value="C:plasma membrane"/>
    <property type="evidence" value="ECO:0000318"/>
    <property type="project" value="GO_Central"/>
</dbReference>
<dbReference type="GO" id="GO:0015099">
    <property type="term" value="F:nickel cation transmembrane transporter activity"/>
    <property type="evidence" value="ECO:0007669"/>
    <property type="project" value="InterPro"/>
</dbReference>
<dbReference type="GO" id="GO:0022857">
    <property type="term" value="F:transmembrane transporter activity"/>
    <property type="evidence" value="ECO:0000318"/>
    <property type="project" value="GO_Central"/>
</dbReference>
<dbReference type="CDD" id="cd06261">
    <property type="entry name" value="TM_PBP2"/>
    <property type="match status" value="1"/>
</dbReference>
<dbReference type="Gene3D" id="1.10.3720.10">
    <property type="entry name" value="MetI-like"/>
    <property type="match status" value="1"/>
</dbReference>
<dbReference type="InterPro" id="IPR045621">
    <property type="entry name" value="BPD_transp_1_N"/>
</dbReference>
<dbReference type="InterPro" id="IPR000515">
    <property type="entry name" value="MetI-like"/>
</dbReference>
<dbReference type="InterPro" id="IPR035906">
    <property type="entry name" value="MetI-like_sf"/>
</dbReference>
<dbReference type="InterPro" id="IPR050045">
    <property type="entry name" value="Opp2B"/>
</dbReference>
<dbReference type="NCBIfam" id="NF045470">
    <property type="entry name" value="Opp2B"/>
    <property type="match status" value="1"/>
</dbReference>
<dbReference type="PANTHER" id="PTHR43163">
    <property type="entry name" value="DIPEPTIDE TRANSPORT SYSTEM PERMEASE PROTEIN DPPB-RELATED"/>
    <property type="match status" value="1"/>
</dbReference>
<dbReference type="PANTHER" id="PTHR43163:SF6">
    <property type="entry name" value="DIPEPTIDE TRANSPORT SYSTEM PERMEASE PROTEIN DPPB-RELATED"/>
    <property type="match status" value="1"/>
</dbReference>
<dbReference type="Pfam" id="PF00528">
    <property type="entry name" value="BPD_transp_1"/>
    <property type="match status" value="1"/>
</dbReference>
<dbReference type="Pfam" id="PF19300">
    <property type="entry name" value="BPD_transp_1_N"/>
    <property type="match status" value="1"/>
</dbReference>
<dbReference type="SUPFAM" id="SSF161098">
    <property type="entry name" value="MetI-like"/>
    <property type="match status" value="1"/>
</dbReference>
<dbReference type="PROSITE" id="PS50928">
    <property type="entry name" value="ABC_TM1"/>
    <property type="match status" value="1"/>
</dbReference>
<protein>
    <recommendedName>
        <fullName evidence="5">Nickel import system permease protein NikB</fullName>
    </recommendedName>
</protein>
<proteinExistence type="evidence at protein level"/>
<accession>Q2FYQ5</accession>
<accession>Q84AN7</accession>
<accession>Q9ZGN6</accession>